<comment type="function">
    <text evidence="1">Catalyzes the ATP-dependent transfer of a sulfur to tRNA to produce 4-thiouridine in position 8 of tRNAs, which functions as a near-UV photosensor. Also catalyzes the transfer of sulfur to the sulfur carrier protein ThiS, forming ThiS-thiocarboxylate. This is a step in the synthesis of thiazole, in the thiamine biosynthesis pathway. The sulfur is donated as persulfide by IscS.</text>
</comment>
<comment type="catalytic activity">
    <reaction evidence="1">
        <text>[ThiI sulfur-carrier protein]-S-sulfanyl-L-cysteine + a uridine in tRNA + 2 reduced [2Fe-2S]-[ferredoxin] + ATP + H(+) = [ThiI sulfur-carrier protein]-L-cysteine + a 4-thiouridine in tRNA + 2 oxidized [2Fe-2S]-[ferredoxin] + AMP + diphosphate</text>
        <dbReference type="Rhea" id="RHEA:24176"/>
        <dbReference type="Rhea" id="RHEA-COMP:10000"/>
        <dbReference type="Rhea" id="RHEA-COMP:10001"/>
        <dbReference type="Rhea" id="RHEA-COMP:13337"/>
        <dbReference type="Rhea" id="RHEA-COMP:13338"/>
        <dbReference type="Rhea" id="RHEA-COMP:13339"/>
        <dbReference type="Rhea" id="RHEA-COMP:13340"/>
        <dbReference type="ChEBI" id="CHEBI:15378"/>
        <dbReference type="ChEBI" id="CHEBI:29950"/>
        <dbReference type="ChEBI" id="CHEBI:30616"/>
        <dbReference type="ChEBI" id="CHEBI:33019"/>
        <dbReference type="ChEBI" id="CHEBI:33737"/>
        <dbReference type="ChEBI" id="CHEBI:33738"/>
        <dbReference type="ChEBI" id="CHEBI:61963"/>
        <dbReference type="ChEBI" id="CHEBI:65315"/>
        <dbReference type="ChEBI" id="CHEBI:136798"/>
        <dbReference type="ChEBI" id="CHEBI:456215"/>
        <dbReference type="EC" id="2.8.1.4"/>
    </reaction>
</comment>
<comment type="catalytic activity">
    <reaction evidence="1">
        <text>[ThiS sulfur-carrier protein]-C-terminal Gly-Gly-AMP + S-sulfanyl-L-cysteinyl-[cysteine desulfurase] + AH2 = [ThiS sulfur-carrier protein]-C-terminal-Gly-aminoethanethioate + L-cysteinyl-[cysteine desulfurase] + A + AMP + 2 H(+)</text>
        <dbReference type="Rhea" id="RHEA:43340"/>
        <dbReference type="Rhea" id="RHEA-COMP:12157"/>
        <dbReference type="Rhea" id="RHEA-COMP:12158"/>
        <dbReference type="Rhea" id="RHEA-COMP:12910"/>
        <dbReference type="Rhea" id="RHEA-COMP:19908"/>
        <dbReference type="ChEBI" id="CHEBI:13193"/>
        <dbReference type="ChEBI" id="CHEBI:15378"/>
        <dbReference type="ChEBI" id="CHEBI:17499"/>
        <dbReference type="ChEBI" id="CHEBI:29950"/>
        <dbReference type="ChEBI" id="CHEBI:61963"/>
        <dbReference type="ChEBI" id="CHEBI:90618"/>
        <dbReference type="ChEBI" id="CHEBI:232372"/>
        <dbReference type="ChEBI" id="CHEBI:456215"/>
    </reaction>
</comment>
<comment type="pathway">
    <text evidence="1">Cofactor biosynthesis; thiamine diphosphate biosynthesis.</text>
</comment>
<comment type="subcellular location">
    <subcellularLocation>
        <location evidence="1">Cytoplasm</location>
    </subcellularLocation>
</comment>
<comment type="similarity">
    <text evidence="1">Belongs to the ThiI family.</text>
</comment>
<gene>
    <name evidence="1" type="primary">thiI</name>
    <name type="ordered locus">E2348C_0358</name>
</gene>
<protein>
    <recommendedName>
        <fullName evidence="1">tRNA sulfurtransferase</fullName>
        <ecNumber evidence="1">2.8.1.4</ecNumber>
    </recommendedName>
    <alternativeName>
        <fullName evidence="1">Sulfur carrier protein ThiS sulfurtransferase</fullName>
    </alternativeName>
    <alternativeName>
        <fullName evidence="1">Thiamine biosynthesis protein ThiI</fullName>
    </alternativeName>
    <alternativeName>
        <fullName evidence="1">tRNA 4-thiouridine synthase</fullName>
    </alternativeName>
</protein>
<sequence>MKFIIKLFPEITIKSQSVRLRFIKILTGNIRNVLKHYDETLAVVRHWDNIEVRAKDENQRLAIRDALTRIPGIHHILEVEDVPFTDMHDIFEKALVQYRDQLEGKTFCVRVKRRGKHDFSSIDVERYVGGGLNQHIESARVKLTNPDVTVHLEVEDDRLLLIKGRYEGIGGFPIGTQEDVLSLISGGFDSGVSSYMLMRRGCRVHYCFFNLGGAAHEIGVRQVAHYLWNRFGSSHRVRFVAINFEPVVGEILEKIDDGQMGVILKRMMVRAASKVAERYGVQALVTGEALGQVSSQTLTNLRLIDNVSDTLILRPLISYDKEHIINLARQIGTEDFARTMPEYCGVISKSPTVKAVKSKIEAEEEKFDFSILDKVVEEANNVDIREIAQQTEQEVVEVETVNGFGPNDVILDIRSIDEQEDKPLKVEGIDVVSLPFYKLSTKFGDLDQSKTWLLWCERGVMSRLQALYLREQGFNNVKVYRP</sequence>
<accession>B7UJP6</accession>
<proteinExistence type="inferred from homology"/>
<keyword id="KW-0067">ATP-binding</keyword>
<keyword id="KW-0963">Cytoplasm</keyword>
<keyword id="KW-1015">Disulfide bond</keyword>
<keyword id="KW-0547">Nucleotide-binding</keyword>
<keyword id="KW-0676">Redox-active center</keyword>
<keyword id="KW-1185">Reference proteome</keyword>
<keyword id="KW-0694">RNA-binding</keyword>
<keyword id="KW-0784">Thiamine biosynthesis</keyword>
<keyword id="KW-0808">Transferase</keyword>
<keyword id="KW-0820">tRNA-binding</keyword>
<feature type="chain" id="PRO_1000196925" description="tRNA sulfurtransferase">
    <location>
        <begin position="1"/>
        <end position="482"/>
    </location>
</feature>
<feature type="domain" description="THUMP" evidence="1">
    <location>
        <begin position="61"/>
        <end position="165"/>
    </location>
</feature>
<feature type="domain" description="Rhodanese" evidence="1">
    <location>
        <begin position="404"/>
        <end position="482"/>
    </location>
</feature>
<feature type="active site" description="Cysteine persulfide intermediate" evidence="1">
    <location>
        <position position="456"/>
    </location>
</feature>
<feature type="binding site" evidence="1">
    <location>
        <begin position="183"/>
        <end position="184"/>
    </location>
    <ligand>
        <name>ATP</name>
        <dbReference type="ChEBI" id="CHEBI:30616"/>
    </ligand>
</feature>
<feature type="binding site" evidence="1">
    <location>
        <position position="265"/>
    </location>
    <ligand>
        <name>ATP</name>
        <dbReference type="ChEBI" id="CHEBI:30616"/>
    </ligand>
</feature>
<feature type="binding site" evidence="1">
    <location>
        <position position="287"/>
    </location>
    <ligand>
        <name>ATP</name>
        <dbReference type="ChEBI" id="CHEBI:30616"/>
    </ligand>
</feature>
<feature type="binding site" evidence="1">
    <location>
        <position position="296"/>
    </location>
    <ligand>
        <name>ATP</name>
        <dbReference type="ChEBI" id="CHEBI:30616"/>
    </ligand>
</feature>
<feature type="disulfide bond" description="Redox-active" evidence="1">
    <location>
        <begin position="344"/>
        <end position="456"/>
    </location>
</feature>
<organism>
    <name type="scientific">Escherichia coli O127:H6 (strain E2348/69 / EPEC)</name>
    <dbReference type="NCBI Taxonomy" id="574521"/>
    <lineage>
        <taxon>Bacteria</taxon>
        <taxon>Pseudomonadati</taxon>
        <taxon>Pseudomonadota</taxon>
        <taxon>Gammaproteobacteria</taxon>
        <taxon>Enterobacterales</taxon>
        <taxon>Enterobacteriaceae</taxon>
        <taxon>Escherichia</taxon>
    </lineage>
</organism>
<evidence type="ECO:0000255" key="1">
    <source>
        <dbReference type="HAMAP-Rule" id="MF_00021"/>
    </source>
</evidence>
<dbReference type="EC" id="2.8.1.4" evidence="1"/>
<dbReference type="EMBL" id="FM180568">
    <property type="protein sequence ID" value="CAS07906.1"/>
    <property type="molecule type" value="Genomic_DNA"/>
</dbReference>
<dbReference type="RefSeq" id="WP_000668665.1">
    <property type="nucleotide sequence ID" value="NC_011601.1"/>
</dbReference>
<dbReference type="SMR" id="B7UJP6"/>
<dbReference type="KEGG" id="ecg:E2348C_0358"/>
<dbReference type="HOGENOM" id="CLU_037952_4_1_6"/>
<dbReference type="UniPathway" id="UPA00060"/>
<dbReference type="Proteomes" id="UP000008205">
    <property type="component" value="Chromosome"/>
</dbReference>
<dbReference type="GO" id="GO:0005829">
    <property type="term" value="C:cytosol"/>
    <property type="evidence" value="ECO:0007669"/>
    <property type="project" value="TreeGrafter"/>
</dbReference>
<dbReference type="GO" id="GO:0005524">
    <property type="term" value="F:ATP binding"/>
    <property type="evidence" value="ECO:0007669"/>
    <property type="project" value="UniProtKB-UniRule"/>
</dbReference>
<dbReference type="GO" id="GO:0004810">
    <property type="term" value="F:CCA tRNA nucleotidyltransferase activity"/>
    <property type="evidence" value="ECO:0007669"/>
    <property type="project" value="InterPro"/>
</dbReference>
<dbReference type="GO" id="GO:0000049">
    <property type="term" value="F:tRNA binding"/>
    <property type="evidence" value="ECO:0007669"/>
    <property type="project" value="UniProtKB-UniRule"/>
</dbReference>
<dbReference type="GO" id="GO:0140741">
    <property type="term" value="F:tRNA-uracil-4 sulfurtransferase activity"/>
    <property type="evidence" value="ECO:0007669"/>
    <property type="project" value="UniProtKB-EC"/>
</dbReference>
<dbReference type="GO" id="GO:0009228">
    <property type="term" value="P:thiamine biosynthetic process"/>
    <property type="evidence" value="ECO:0007669"/>
    <property type="project" value="UniProtKB-KW"/>
</dbReference>
<dbReference type="GO" id="GO:0009229">
    <property type="term" value="P:thiamine diphosphate biosynthetic process"/>
    <property type="evidence" value="ECO:0007669"/>
    <property type="project" value="UniProtKB-UniRule"/>
</dbReference>
<dbReference type="GO" id="GO:0052837">
    <property type="term" value="P:thiazole biosynthetic process"/>
    <property type="evidence" value="ECO:0007669"/>
    <property type="project" value="InterPro"/>
</dbReference>
<dbReference type="GO" id="GO:0002937">
    <property type="term" value="P:tRNA 4-thiouridine biosynthesis"/>
    <property type="evidence" value="ECO:0007669"/>
    <property type="project" value="TreeGrafter"/>
</dbReference>
<dbReference type="CDD" id="cd01712">
    <property type="entry name" value="PPase_ThiI"/>
    <property type="match status" value="1"/>
</dbReference>
<dbReference type="CDD" id="cd00158">
    <property type="entry name" value="RHOD"/>
    <property type="match status" value="1"/>
</dbReference>
<dbReference type="CDD" id="cd11716">
    <property type="entry name" value="THUMP_ThiI"/>
    <property type="match status" value="1"/>
</dbReference>
<dbReference type="FunFam" id="3.30.2130.30:FF:000002">
    <property type="entry name" value="tRNA sulfurtransferase"/>
    <property type="match status" value="1"/>
</dbReference>
<dbReference type="FunFam" id="3.40.250.10:FF:000003">
    <property type="entry name" value="tRNA sulfurtransferase"/>
    <property type="match status" value="1"/>
</dbReference>
<dbReference type="FunFam" id="3.40.50.620:FF:000029">
    <property type="entry name" value="tRNA sulfurtransferase"/>
    <property type="match status" value="1"/>
</dbReference>
<dbReference type="Gene3D" id="3.30.2130.30">
    <property type="match status" value="1"/>
</dbReference>
<dbReference type="Gene3D" id="3.40.50.620">
    <property type="entry name" value="HUPs"/>
    <property type="match status" value="1"/>
</dbReference>
<dbReference type="Gene3D" id="3.40.250.10">
    <property type="entry name" value="Rhodanese-like domain"/>
    <property type="match status" value="1"/>
</dbReference>
<dbReference type="HAMAP" id="MF_00021">
    <property type="entry name" value="ThiI"/>
    <property type="match status" value="1"/>
</dbReference>
<dbReference type="InterPro" id="IPR001763">
    <property type="entry name" value="Rhodanese-like_dom"/>
</dbReference>
<dbReference type="InterPro" id="IPR036873">
    <property type="entry name" value="Rhodanese-like_dom_sf"/>
</dbReference>
<dbReference type="InterPro" id="IPR014729">
    <property type="entry name" value="Rossmann-like_a/b/a_fold"/>
</dbReference>
<dbReference type="InterPro" id="IPR020536">
    <property type="entry name" value="ThiI_AANH"/>
</dbReference>
<dbReference type="InterPro" id="IPR054173">
    <property type="entry name" value="ThiI_fer"/>
</dbReference>
<dbReference type="InterPro" id="IPR049961">
    <property type="entry name" value="ThiI_N"/>
</dbReference>
<dbReference type="InterPro" id="IPR026340">
    <property type="entry name" value="THII_Thiazole_biosynth_dom"/>
</dbReference>
<dbReference type="InterPro" id="IPR004114">
    <property type="entry name" value="THUMP_dom"/>
</dbReference>
<dbReference type="InterPro" id="IPR049962">
    <property type="entry name" value="THUMP_ThiI"/>
</dbReference>
<dbReference type="InterPro" id="IPR003720">
    <property type="entry name" value="tRNA_STrfase"/>
</dbReference>
<dbReference type="InterPro" id="IPR050102">
    <property type="entry name" value="tRNA_sulfurtransferase_ThiI"/>
</dbReference>
<dbReference type="NCBIfam" id="TIGR04271">
    <property type="entry name" value="ThiI_C_thiazole"/>
    <property type="match status" value="1"/>
</dbReference>
<dbReference type="NCBIfam" id="TIGR00342">
    <property type="entry name" value="tRNA uracil 4-sulfurtransferase ThiI"/>
    <property type="match status" value="1"/>
</dbReference>
<dbReference type="PANTHER" id="PTHR43209">
    <property type="entry name" value="TRNA SULFURTRANSFERASE"/>
    <property type="match status" value="1"/>
</dbReference>
<dbReference type="PANTHER" id="PTHR43209:SF1">
    <property type="entry name" value="TRNA SULFURTRANSFERASE"/>
    <property type="match status" value="1"/>
</dbReference>
<dbReference type="Pfam" id="PF02568">
    <property type="entry name" value="ThiI"/>
    <property type="match status" value="1"/>
</dbReference>
<dbReference type="Pfam" id="PF22025">
    <property type="entry name" value="ThiI_fer"/>
    <property type="match status" value="1"/>
</dbReference>
<dbReference type="Pfam" id="PF02926">
    <property type="entry name" value="THUMP"/>
    <property type="match status" value="1"/>
</dbReference>
<dbReference type="SMART" id="SM00981">
    <property type="entry name" value="THUMP"/>
    <property type="match status" value="1"/>
</dbReference>
<dbReference type="SUPFAM" id="SSF52402">
    <property type="entry name" value="Adenine nucleotide alpha hydrolases-like"/>
    <property type="match status" value="1"/>
</dbReference>
<dbReference type="SUPFAM" id="SSF52821">
    <property type="entry name" value="Rhodanese/Cell cycle control phosphatase"/>
    <property type="match status" value="1"/>
</dbReference>
<dbReference type="SUPFAM" id="SSF143437">
    <property type="entry name" value="THUMP domain-like"/>
    <property type="match status" value="1"/>
</dbReference>
<dbReference type="PROSITE" id="PS50206">
    <property type="entry name" value="RHODANESE_3"/>
    <property type="match status" value="1"/>
</dbReference>
<dbReference type="PROSITE" id="PS51165">
    <property type="entry name" value="THUMP"/>
    <property type="match status" value="1"/>
</dbReference>
<reference key="1">
    <citation type="journal article" date="2009" name="J. Bacteriol.">
        <title>Complete genome sequence and comparative genome analysis of enteropathogenic Escherichia coli O127:H6 strain E2348/69.</title>
        <authorList>
            <person name="Iguchi A."/>
            <person name="Thomson N.R."/>
            <person name="Ogura Y."/>
            <person name="Saunders D."/>
            <person name="Ooka T."/>
            <person name="Henderson I.R."/>
            <person name="Harris D."/>
            <person name="Asadulghani M."/>
            <person name="Kurokawa K."/>
            <person name="Dean P."/>
            <person name="Kenny B."/>
            <person name="Quail M.A."/>
            <person name="Thurston S."/>
            <person name="Dougan G."/>
            <person name="Hayashi T."/>
            <person name="Parkhill J."/>
            <person name="Frankel G."/>
        </authorList>
    </citation>
    <scope>NUCLEOTIDE SEQUENCE [LARGE SCALE GENOMIC DNA]</scope>
    <source>
        <strain>E2348/69 / EPEC</strain>
    </source>
</reference>
<name>THII_ECO27</name>